<name>GLYA_LEGPC</name>
<protein>
    <recommendedName>
        <fullName evidence="1">Serine hydroxymethyltransferase</fullName>
        <shortName evidence="1">SHMT</shortName>
        <shortName evidence="1">Serine methylase</shortName>
        <ecNumber evidence="1">2.1.2.1</ecNumber>
    </recommendedName>
</protein>
<comment type="function">
    <text evidence="1">Catalyzes the reversible interconversion of serine and glycine with tetrahydrofolate (THF) serving as the one-carbon carrier. This reaction serves as the major source of one-carbon groups required for the biosynthesis of purines, thymidylate, methionine, and other important biomolecules. Also exhibits THF-independent aldolase activity toward beta-hydroxyamino acids, producing glycine and aldehydes, via a retro-aldol mechanism.</text>
</comment>
<comment type="catalytic activity">
    <reaction evidence="1">
        <text>(6R)-5,10-methylene-5,6,7,8-tetrahydrofolate + glycine + H2O = (6S)-5,6,7,8-tetrahydrofolate + L-serine</text>
        <dbReference type="Rhea" id="RHEA:15481"/>
        <dbReference type="ChEBI" id="CHEBI:15377"/>
        <dbReference type="ChEBI" id="CHEBI:15636"/>
        <dbReference type="ChEBI" id="CHEBI:33384"/>
        <dbReference type="ChEBI" id="CHEBI:57305"/>
        <dbReference type="ChEBI" id="CHEBI:57453"/>
        <dbReference type="EC" id="2.1.2.1"/>
    </reaction>
</comment>
<comment type="cofactor">
    <cofactor evidence="1">
        <name>pyridoxal 5'-phosphate</name>
        <dbReference type="ChEBI" id="CHEBI:597326"/>
    </cofactor>
</comment>
<comment type="pathway">
    <text evidence="1">One-carbon metabolism; tetrahydrofolate interconversion.</text>
</comment>
<comment type="pathway">
    <text evidence="1">Amino-acid biosynthesis; glycine biosynthesis; glycine from L-serine: step 1/1.</text>
</comment>
<comment type="subunit">
    <text evidence="1">Homodimer.</text>
</comment>
<comment type="subcellular location">
    <subcellularLocation>
        <location evidence="1">Cytoplasm</location>
    </subcellularLocation>
</comment>
<comment type="similarity">
    <text evidence="1">Belongs to the SHMT family.</text>
</comment>
<sequence length="417" mass="45575">MFDESYTIKNFDDVLFKAISDEKRRQEEHIELIASENYVSPRVLEAQGSVLTNKYAEGYPGKRYYGGCEFVDVAEELAISRAKLLFGAHYVNVQPHSGSQANAAVMMALLSPGDTFMGMALPHGGHLTHGSKVNFSGKLYHSVEYGVDSNTGLIDYDALEKLALQHKPKLIIAGFSAYSRILDWARFREIADKVGAYLMADIAHVAGLVAVGLYPSPVPYADVVTTTTHKTLRGPRGGLILCKENEEIEKKLNSSVFPGMQGGPLMHVIAAKAVAFAEALLPEFKTYQQQVLANARTMCSVLQSRGYDIVSGGTDNHLLLVDLINKGITGKEADAALGRANITVNKNSVPNDPRSPFVTSGLRLGTPAATTRGFKEREITLLSNWVADVLDNVHDETNISRVKTQVLLLCREFPVYA</sequence>
<gene>
    <name evidence="1" type="primary">glyA</name>
    <name type="ordered locus">LPC_2567</name>
</gene>
<keyword id="KW-0028">Amino-acid biosynthesis</keyword>
<keyword id="KW-0963">Cytoplasm</keyword>
<keyword id="KW-0554">One-carbon metabolism</keyword>
<keyword id="KW-0663">Pyridoxal phosphate</keyword>
<keyword id="KW-0808">Transferase</keyword>
<organism>
    <name type="scientific">Legionella pneumophila (strain Corby)</name>
    <dbReference type="NCBI Taxonomy" id="400673"/>
    <lineage>
        <taxon>Bacteria</taxon>
        <taxon>Pseudomonadati</taxon>
        <taxon>Pseudomonadota</taxon>
        <taxon>Gammaproteobacteria</taxon>
        <taxon>Legionellales</taxon>
        <taxon>Legionellaceae</taxon>
        <taxon>Legionella</taxon>
    </lineage>
</organism>
<accession>A5IGI2</accession>
<dbReference type="EC" id="2.1.2.1" evidence="1"/>
<dbReference type="EMBL" id="CP000675">
    <property type="protein sequence ID" value="ABQ56482.1"/>
    <property type="molecule type" value="Genomic_DNA"/>
</dbReference>
<dbReference type="RefSeq" id="WP_011945870.1">
    <property type="nucleotide sequence ID" value="NC_009494.2"/>
</dbReference>
<dbReference type="SMR" id="A5IGI2"/>
<dbReference type="KEGG" id="lpc:LPC_2567"/>
<dbReference type="HOGENOM" id="CLU_022477_2_1_6"/>
<dbReference type="UniPathway" id="UPA00193"/>
<dbReference type="UniPathway" id="UPA00288">
    <property type="reaction ID" value="UER01023"/>
</dbReference>
<dbReference type="GO" id="GO:0005829">
    <property type="term" value="C:cytosol"/>
    <property type="evidence" value="ECO:0007669"/>
    <property type="project" value="TreeGrafter"/>
</dbReference>
<dbReference type="GO" id="GO:0004372">
    <property type="term" value="F:glycine hydroxymethyltransferase activity"/>
    <property type="evidence" value="ECO:0007669"/>
    <property type="project" value="UniProtKB-UniRule"/>
</dbReference>
<dbReference type="GO" id="GO:0030170">
    <property type="term" value="F:pyridoxal phosphate binding"/>
    <property type="evidence" value="ECO:0007669"/>
    <property type="project" value="UniProtKB-UniRule"/>
</dbReference>
<dbReference type="GO" id="GO:0019264">
    <property type="term" value="P:glycine biosynthetic process from serine"/>
    <property type="evidence" value="ECO:0007669"/>
    <property type="project" value="UniProtKB-UniRule"/>
</dbReference>
<dbReference type="GO" id="GO:0035999">
    <property type="term" value="P:tetrahydrofolate interconversion"/>
    <property type="evidence" value="ECO:0007669"/>
    <property type="project" value="UniProtKB-UniRule"/>
</dbReference>
<dbReference type="CDD" id="cd00378">
    <property type="entry name" value="SHMT"/>
    <property type="match status" value="1"/>
</dbReference>
<dbReference type="FunFam" id="3.40.640.10:FF:000001">
    <property type="entry name" value="Serine hydroxymethyltransferase"/>
    <property type="match status" value="1"/>
</dbReference>
<dbReference type="FunFam" id="3.90.1150.10:FF:000003">
    <property type="entry name" value="Serine hydroxymethyltransferase"/>
    <property type="match status" value="1"/>
</dbReference>
<dbReference type="Gene3D" id="3.90.1150.10">
    <property type="entry name" value="Aspartate Aminotransferase, domain 1"/>
    <property type="match status" value="1"/>
</dbReference>
<dbReference type="Gene3D" id="3.40.640.10">
    <property type="entry name" value="Type I PLP-dependent aspartate aminotransferase-like (Major domain)"/>
    <property type="match status" value="1"/>
</dbReference>
<dbReference type="HAMAP" id="MF_00051">
    <property type="entry name" value="SHMT"/>
    <property type="match status" value="1"/>
</dbReference>
<dbReference type="InterPro" id="IPR015424">
    <property type="entry name" value="PyrdxlP-dep_Trfase"/>
</dbReference>
<dbReference type="InterPro" id="IPR015421">
    <property type="entry name" value="PyrdxlP-dep_Trfase_major"/>
</dbReference>
<dbReference type="InterPro" id="IPR015422">
    <property type="entry name" value="PyrdxlP-dep_Trfase_small"/>
</dbReference>
<dbReference type="InterPro" id="IPR001085">
    <property type="entry name" value="Ser_HO-MeTrfase"/>
</dbReference>
<dbReference type="InterPro" id="IPR049943">
    <property type="entry name" value="Ser_HO-MeTrfase-like"/>
</dbReference>
<dbReference type="InterPro" id="IPR019798">
    <property type="entry name" value="Ser_HO-MeTrfase_PLP_BS"/>
</dbReference>
<dbReference type="InterPro" id="IPR039429">
    <property type="entry name" value="SHMT-like_dom"/>
</dbReference>
<dbReference type="NCBIfam" id="NF000586">
    <property type="entry name" value="PRK00011.1"/>
    <property type="match status" value="1"/>
</dbReference>
<dbReference type="PANTHER" id="PTHR11680">
    <property type="entry name" value="SERINE HYDROXYMETHYLTRANSFERASE"/>
    <property type="match status" value="1"/>
</dbReference>
<dbReference type="PANTHER" id="PTHR11680:SF50">
    <property type="entry name" value="SERINE HYDROXYMETHYLTRANSFERASE"/>
    <property type="match status" value="1"/>
</dbReference>
<dbReference type="Pfam" id="PF00464">
    <property type="entry name" value="SHMT"/>
    <property type="match status" value="1"/>
</dbReference>
<dbReference type="PIRSF" id="PIRSF000412">
    <property type="entry name" value="SHMT"/>
    <property type="match status" value="1"/>
</dbReference>
<dbReference type="SUPFAM" id="SSF53383">
    <property type="entry name" value="PLP-dependent transferases"/>
    <property type="match status" value="1"/>
</dbReference>
<dbReference type="PROSITE" id="PS00096">
    <property type="entry name" value="SHMT"/>
    <property type="match status" value="1"/>
</dbReference>
<proteinExistence type="inferred from homology"/>
<feature type="chain" id="PRO_1000006275" description="Serine hydroxymethyltransferase">
    <location>
        <begin position="1"/>
        <end position="417"/>
    </location>
</feature>
<feature type="binding site" evidence="1">
    <location>
        <position position="121"/>
    </location>
    <ligand>
        <name>(6S)-5,6,7,8-tetrahydrofolate</name>
        <dbReference type="ChEBI" id="CHEBI:57453"/>
    </ligand>
</feature>
<feature type="binding site" evidence="1">
    <location>
        <begin position="125"/>
        <end position="127"/>
    </location>
    <ligand>
        <name>(6S)-5,6,7,8-tetrahydrofolate</name>
        <dbReference type="ChEBI" id="CHEBI:57453"/>
    </ligand>
</feature>
<feature type="binding site" evidence="1">
    <location>
        <begin position="355"/>
        <end position="357"/>
    </location>
    <ligand>
        <name>(6S)-5,6,7,8-tetrahydrofolate</name>
        <dbReference type="ChEBI" id="CHEBI:57453"/>
    </ligand>
</feature>
<feature type="site" description="Plays an important role in substrate specificity" evidence="1">
    <location>
        <position position="229"/>
    </location>
</feature>
<feature type="modified residue" description="N6-(pyridoxal phosphate)lysine" evidence="1">
    <location>
        <position position="230"/>
    </location>
</feature>
<reference key="1">
    <citation type="submission" date="2006-11" db="EMBL/GenBank/DDBJ databases">
        <title>Identification and characterization of a new conjugation/ type IVA secretion system (trb/tra) of L. pneumophila Corby localized on a mobile genomic island.</title>
        <authorList>
            <person name="Gloeckner G."/>
            <person name="Albert-Weissenberger C."/>
            <person name="Weinmann E."/>
            <person name="Jacobi S."/>
            <person name="Schunder E."/>
            <person name="Steinert M."/>
            <person name="Buchrieser C."/>
            <person name="Hacker J."/>
            <person name="Heuner K."/>
        </authorList>
    </citation>
    <scope>NUCLEOTIDE SEQUENCE [LARGE SCALE GENOMIC DNA]</scope>
    <source>
        <strain>Corby</strain>
    </source>
</reference>
<evidence type="ECO:0000255" key="1">
    <source>
        <dbReference type="HAMAP-Rule" id="MF_00051"/>
    </source>
</evidence>